<organism>
    <name type="scientific">Corynebacterium glutamicum (strain ATCC 13032 / DSM 20300 / JCM 1318 / BCRC 11384 / CCUG 27702 / LMG 3730 / NBRC 12168 / NCIMB 10025 / NRRL B-2784 / 534)</name>
    <dbReference type="NCBI Taxonomy" id="196627"/>
    <lineage>
        <taxon>Bacteria</taxon>
        <taxon>Bacillati</taxon>
        <taxon>Actinomycetota</taxon>
        <taxon>Actinomycetes</taxon>
        <taxon>Mycobacteriales</taxon>
        <taxon>Corynebacteriaceae</taxon>
        <taxon>Corynebacterium</taxon>
    </lineage>
</organism>
<accession>Q8NSS1</accession>
<dbReference type="EMBL" id="BA000036">
    <property type="protein sequence ID" value="BAB97990.1"/>
    <property type="molecule type" value="Genomic_DNA"/>
</dbReference>
<dbReference type="EMBL" id="BX927149">
    <property type="protein sequence ID" value="CAF19302.1"/>
    <property type="molecule type" value="Genomic_DNA"/>
</dbReference>
<dbReference type="RefSeq" id="NP_599833.2">
    <property type="nucleotide sequence ID" value="NC_003450.3"/>
</dbReference>
<dbReference type="RefSeq" id="WP_003854559.1">
    <property type="nucleotide sequence ID" value="NC_006958.1"/>
</dbReference>
<dbReference type="SMR" id="Q8NSS1"/>
<dbReference type="STRING" id="196627.cg0690"/>
<dbReference type="GeneID" id="1018601"/>
<dbReference type="KEGG" id="cgb:cg0690"/>
<dbReference type="KEGG" id="cgl:Cgl0597"/>
<dbReference type="PATRIC" id="fig|196627.13.peg.588"/>
<dbReference type="eggNOG" id="COG0234">
    <property type="taxonomic scope" value="Bacteria"/>
</dbReference>
<dbReference type="HOGENOM" id="CLU_132825_2_0_11"/>
<dbReference type="OrthoDB" id="9806791at2"/>
<dbReference type="BioCyc" id="CORYNE:G18NG-10159-MONOMER"/>
<dbReference type="Proteomes" id="UP000000582">
    <property type="component" value="Chromosome"/>
</dbReference>
<dbReference type="Proteomes" id="UP000001009">
    <property type="component" value="Chromosome"/>
</dbReference>
<dbReference type="GO" id="GO:0005737">
    <property type="term" value="C:cytoplasm"/>
    <property type="evidence" value="ECO:0007669"/>
    <property type="project" value="UniProtKB-SubCell"/>
</dbReference>
<dbReference type="GO" id="GO:0005524">
    <property type="term" value="F:ATP binding"/>
    <property type="evidence" value="ECO:0007669"/>
    <property type="project" value="InterPro"/>
</dbReference>
<dbReference type="GO" id="GO:0046872">
    <property type="term" value="F:metal ion binding"/>
    <property type="evidence" value="ECO:0007669"/>
    <property type="project" value="TreeGrafter"/>
</dbReference>
<dbReference type="GO" id="GO:0044183">
    <property type="term" value="F:protein folding chaperone"/>
    <property type="evidence" value="ECO:0007669"/>
    <property type="project" value="InterPro"/>
</dbReference>
<dbReference type="GO" id="GO:0051087">
    <property type="term" value="F:protein-folding chaperone binding"/>
    <property type="evidence" value="ECO:0007669"/>
    <property type="project" value="TreeGrafter"/>
</dbReference>
<dbReference type="GO" id="GO:0051082">
    <property type="term" value="F:unfolded protein binding"/>
    <property type="evidence" value="ECO:0007669"/>
    <property type="project" value="TreeGrafter"/>
</dbReference>
<dbReference type="GO" id="GO:0051085">
    <property type="term" value="P:chaperone cofactor-dependent protein refolding"/>
    <property type="evidence" value="ECO:0007669"/>
    <property type="project" value="TreeGrafter"/>
</dbReference>
<dbReference type="CDD" id="cd00320">
    <property type="entry name" value="cpn10"/>
    <property type="match status" value="1"/>
</dbReference>
<dbReference type="FunFam" id="2.30.33.40:FF:000001">
    <property type="entry name" value="10 kDa chaperonin"/>
    <property type="match status" value="1"/>
</dbReference>
<dbReference type="Gene3D" id="2.30.33.40">
    <property type="entry name" value="GroES chaperonin"/>
    <property type="match status" value="1"/>
</dbReference>
<dbReference type="HAMAP" id="MF_00580">
    <property type="entry name" value="CH10"/>
    <property type="match status" value="1"/>
</dbReference>
<dbReference type="InterPro" id="IPR020818">
    <property type="entry name" value="Chaperonin_GroES"/>
</dbReference>
<dbReference type="InterPro" id="IPR037124">
    <property type="entry name" value="Chaperonin_GroES_sf"/>
</dbReference>
<dbReference type="InterPro" id="IPR018369">
    <property type="entry name" value="Chaprnonin_Cpn10_CS"/>
</dbReference>
<dbReference type="InterPro" id="IPR011032">
    <property type="entry name" value="GroES-like_sf"/>
</dbReference>
<dbReference type="NCBIfam" id="NF001530">
    <property type="entry name" value="PRK00364.1-6"/>
    <property type="match status" value="1"/>
</dbReference>
<dbReference type="NCBIfam" id="NF001531">
    <property type="entry name" value="PRK00364.2-2"/>
    <property type="match status" value="1"/>
</dbReference>
<dbReference type="NCBIfam" id="NF001533">
    <property type="entry name" value="PRK00364.2-4"/>
    <property type="match status" value="1"/>
</dbReference>
<dbReference type="NCBIfam" id="NF001534">
    <property type="entry name" value="PRK00364.2-5"/>
    <property type="match status" value="1"/>
</dbReference>
<dbReference type="PANTHER" id="PTHR10772">
    <property type="entry name" value="10 KDA HEAT SHOCK PROTEIN"/>
    <property type="match status" value="1"/>
</dbReference>
<dbReference type="PANTHER" id="PTHR10772:SF58">
    <property type="entry name" value="CO-CHAPERONIN GROES"/>
    <property type="match status" value="1"/>
</dbReference>
<dbReference type="Pfam" id="PF00166">
    <property type="entry name" value="Cpn10"/>
    <property type="match status" value="1"/>
</dbReference>
<dbReference type="PRINTS" id="PR00297">
    <property type="entry name" value="CHAPERONIN10"/>
</dbReference>
<dbReference type="SMART" id="SM00883">
    <property type="entry name" value="Cpn10"/>
    <property type="match status" value="1"/>
</dbReference>
<dbReference type="SUPFAM" id="SSF50129">
    <property type="entry name" value="GroES-like"/>
    <property type="match status" value="1"/>
</dbReference>
<dbReference type="PROSITE" id="PS00681">
    <property type="entry name" value="CHAPERONINS_CPN10"/>
    <property type="match status" value="1"/>
</dbReference>
<sequence>MANVNIKPLEDKILVQINEAETTTASGLVIPDSAKEKPQEATVIAVGPGRFDDKGNRIPLDIKEDDVVIFSRYGGTEIKFGGVEYLLLSARDILAIVEK</sequence>
<reference key="1">
    <citation type="journal article" date="2003" name="Appl. Microbiol. Biotechnol.">
        <title>The Corynebacterium glutamicum genome: features and impacts on biotechnological processes.</title>
        <authorList>
            <person name="Ikeda M."/>
            <person name="Nakagawa S."/>
        </authorList>
    </citation>
    <scope>NUCLEOTIDE SEQUENCE [LARGE SCALE GENOMIC DNA]</scope>
    <source>
        <strain>ATCC 13032 / DSM 20300 / JCM 1318 / BCRC 11384 / CCUG 27702 / LMG 3730 / NBRC 12168 / NCIMB 10025 / NRRL B-2784 / 534</strain>
    </source>
</reference>
<reference key="2">
    <citation type="journal article" date="2003" name="J. Biotechnol.">
        <title>The complete Corynebacterium glutamicum ATCC 13032 genome sequence and its impact on the production of L-aspartate-derived amino acids and vitamins.</title>
        <authorList>
            <person name="Kalinowski J."/>
            <person name="Bathe B."/>
            <person name="Bartels D."/>
            <person name="Bischoff N."/>
            <person name="Bott M."/>
            <person name="Burkovski A."/>
            <person name="Dusch N."/>
            <person name="Eggeling L."/>
            <person name="Eikmanns B.J."/>
            <person name="Gaigalat L."/>
            <person name="Goesmann A."/>
            <person name="Hartmann M."/>
            <person name="Huthmacher K."/>
            <person name="Kraemer R."/>
            <person name="Linke B."/>
            <person name="McHardy A.C."/>
            <person name="Meyer F."/>
            <person name="Moeckel B."/>
            <person name="Pfefferle W."/>
            <person name="Puehler A."/>
            <person name="Rey D.A."/>
            <person name="Rueckert C."/>
            <person name="Rupp O."/>
            <person name="Sahm H."/>
            <person name="Wendisch V.F."/>
            <person name="Wiegraebe I."/>
            <person name="Tauch A."/>
        </authorList>
    </citation>
    <scope>NUCLEOTIDE SEQUENCE [LARGE SCALE GENOMIC DNA]</scope>
    <source>
        <strain>ATCC 13032 / DSM 20300 / JCM 1318 / BCRC 11384 / CCUG 27702 / LMG 3730 / NBRC 12168 / NCIMB 10025 / NRRL B-2784 / 534</strain>
    </source>
</reference>
<comment type="function">
    <text evidence="1">Together with the chaperonin GroEL, plays an essential role in assisting protein folding. The GroEL-GroES system forms a nano-cage that allows encapsulation of the non-native substrate proteins and provides a physical environment optimized to promote and accelerate protein folding. GroES binds to the apical surface of the GroEL ring, thereby capping the opening of the GroEL channel.</text>
</comment>
<comment type="subunit">
    <text evidence="1">Heptamer of 7 subunits arranged in a ring. Interacts with the chaperonin GroEL.</text>
</comment>
<comment type="subcellular location">
    <subcellularLocation>
        <location evidence="1">Cytoplasm</location>
    </subcellularLocation>
</comment>
<comment type="similarity">
    <text evidence="1">Belongs to the GroES chaperonin family.</text>
</comment>
<gene>
    <name evidence="1" type="primary">groES</name>
    <name evidence="1" type="synonym">groS</name>
    <name type="ordered locus">Cgl0597</name>
    <name type="ordered locus">cg0690</name>
</gene>
<name>CH10_CORGL</name>
<evidence type="ECO:0000255" key="1">
    <source>
        <dbReference type="HAMAP-Rule" id="MF_00580"/>
    </source>
</evidence>
<feature type="chain" id="PRO_0000174743" description="Co-chaperonin GroES">
    <location>
        <begin position="1"/>
        <end position="99"/>
    </location>
</feature>
<protein>
    <recommendedName>
        <fullName evidence="1">Co-chaperonin GroES</fullName>
    </recommendedName>
    <alternativeName>
        <fullName evidence="1">10 kDa chaperonin</fullName>
    </alternativeName>
    <alternativeName>
        <fullName evidence="1">Chaperonin-10</fullName>
        <shortName evidence="1">Cpn10</shortName>
    </alternativeName>
</protein>
<proteinExistence type="inferred from homology"/>
<keyword id="KW-0143">Chaperone</keyword>
<keyword id="KW-0963">Cytoplasm</keyword>
<keyword id="KW-1185">Reference proteome</keyword>